<name>RNFE_THISH</name>
<dbReference type="EC" id="7.-.-.-" evidence="1"/>
<dbReference type="EMBL" id="CP001339">
    <property type="protein sequence ID" value="ACL73706.1"/>
    <property type="molecule type" value="Genomic_DNA"/>
</dbReference>
<dbReference type="RefSeq" id="WP_012639181.1">
    <property type="nucleotide sequence ID" value="NC_011901.1"/>
</dbReference>
<dbReference type="SMR" id="B8GMB9"/>
<dbReference type="STRING" id="396588.Tgr7_2631"/>
<dbReference type="KEGG" id="tgr:Tgr7_2631"/>
<dbReference type="eggNOG" id="COG4660">
    <property type="taxonomic scope" value="Bacteria"/>
</dbReference>
<dbReference type="HOGENOM" id="CLU_046659_1_0_6"/>
<dbReference type="Proteomes" id="UP000002383">
    <property type="component" value="Chromosome"/>
</dbReference>
<dbReference type="GO" id="GO:0005886">
    <property type="term" value="C:plasma membrane"/>
    <property type="evidence" value="ECO:0007669"/>
    <property type="project" value="UniProtKB-SubCell"/>
</dbReference>
<dbReference type="GO" id="GO:0022900">
    <property type="term" value="P:electron transport chain"/>
    <property type="evidence" value="ECO:0007669"/>
    <property type="project" value="UniProtKB-UniRule"/>
</dbReference>
<dbReference type="HAMAP" id="MF_00478">
    <property type="entry name" value="RsxE_RnfE"/>
    <property type="match status" value="1"/>
</dbReference>
<dbReference type="InterPro" id="IPR003667">
    <property type="entry name" value="NqrDE/RnfAE"/>
</dbReference>
<dbReference type="InterPro" id="IPR010968">
    <property type="entry name" value="RnfE"/>
</dbReference>
<dbReference type="NCBIfam" id="NF009070">
    <property type="entry name" value="PRK12405.1"/>
    <property type="match status" value="1"/>
</dbReference>
<dbReference type="NCBIfam" id="TIGR01948">
    <property type="entry name" value="rnfE"/>
    <property type="match status" value="1"/>
</dbReference>
<dbReference type="PANTHER" id="PTHR30586">
    <property type="entry name" value="ELECTRON TRANSPORT COMPLEX PROTEIN RNFE"/>
    <property type="match status" value="1"/>
</dbReference>
<dbReference type="PANTHER" id="PTHR30586:SF0">
    <property type="entry name" value="ION-TRANSLOCATING OXIDOREDUCTASE COMPLEX SUBUNIT E"/>
    <property type="match status" value="1"/>
</dbReference>
<dbReference type="Pfam" id="PF02508">
    <property type="entry name" value="Rnf-Nqr"/>
    <property type="match status" value="1"/>
</dbReference>
<dbReference type="PIRSF" id="PIRSF006102">
    <property type="entry name" value="NQR_DE"/>
    <property type="match status" value="1"/>
</dbReference>
<comment type="function">
    <text evidence="1">Part of a membrane-bound complex that couples electron transfer with translocation of ions across the membrane.</text>
</comment>
<comment type="subunit">
    <text evidence="1">The complex is composed of six subunits: RnfA, RnfB, RnfC, RnfD, RnfE and RnfG.</text>
</comment>
<comment type="subcellular location">
    <subcellularLocation>
        <location evidence="1">Cell inner membrane</location>
        <topology evidence="1">Multi-pass membrane protein</topology>
    </subcellularLocation>
</comment>
<comment type="similarity">
    <text evidence="1">Belongs to the NqrDE/RnfAE family.</text>
</comment>
<protein>
    <recommendedName>
        <fullName evidence="1">Ion-translocating oxidoreductase complex subunit E</fullName>
        <ecNumber evidence="1">7.-.-.-</ecNumber>
    </recommendedName>
    <alternativeName>
        <fullName evidence="1">Rnf electron transport complex subunit E</fullName>
    </alternativeName>
</protein>
<feature type="chain" id="PRO_1000135563" description="Ion-translocating oxidoreductase complex subunit E">
    <location>
        <begin position="1"/>
        <end position="228"/>
    </location>
</feature>
<feature type="transmembrane region" description="Helical" evidence="1">
    <location>
        <begin position="24"/>
        <end position="44"/>
    </location>
</feature>
<feature type="transmembrane region" description="Helical" evidence="1">
    <location>
        <begin position="73"/>
        <end position="93"/>
    </location>
</feature>
<feature type="transmembrane region" description="Helical" evidence="1">
    <location>
        <begin position="95"/>
        <end position="115"/>
    </location>
</feature>
<feature type="transmembrane region" description="Helical" evidence="1">
    <location>
        <begin position="130"/>
        <end position="150"/>
    </location>
</feature>
<feature type="transmembrane region" description="Helical" evidence="1">
    <location>
        <begin position="184"/>
        <end position="204"/>
    </location>
</feature>
<gene>
    <name evidence="1" type="primary">rnfE</name>
    <name type="ordered locus">Tgr7_2631</name>
</gene>
<sequence>MSDISYREINANGFWHNNPGLVQLLGLCPLLAISGTVVNALGLGLATTLTLVASNVTVSLIRHWVRPEIRIPVFVLIIASVVTAIELAMNAFFHELYLILGIFIPLIVTNCAIIGRAEAFASKQPIPKALADGLAMGLGFTCVLVALGALREAVGHGTLLADAHLMFGEAARGFSLTLFEEYRGFLLALLPPGAFIALGLLIALKNIIDARLQKRQPAQAAVPVEAAG</sequence>
<keyword id="KW-0997">Cell inner membrane</keyword>
<keyword id="KW-1003">Cell membrane</keyword>
<keyword id="KW-0249">Electron transport</keyword>
<keyword id="KW-0472">Membrane</keyword>
<keyword id="KW-1185">Reference proteome</keyword>
<keyword id="KW-1278">Translocase</keyword>
<keyword id="KW-0812">Transmembrane</keyword>
<keyword id="KW-1133">Transmembrane helix</keyword>
<keyword id="KW-0813">Transport</keyword>
<reference key="1">
    <citation type="journal article" date="2011" name="Stand. Genomic Sci.">
        <title>Complete genome sequence of 'Thioalkalivibrio sulfidophilus' HL-EbGr7.</title>
        <authorList>
            <person name="Muyzer G."/>
            <person name="Sorokin D.Y."/>
            <person name="Mavromatis K."/>
            <person name="Lapidus A."/>
            <person name="Clum A."/>
            <person name="Ivanova N."/>
            <person name="Pati A."/>
            <person name="d'Haeseleer P."/>
            <person name="Woyke T."/>
            <person name="Kyrpides N.C."/>
        </authorList>
    </citation>
    <scope>NUCLEOTIDE SEQUENCE [LARGE SCALE GENOMIC DNA]</scope>
    <source>
        <strain>HL-EbGR7</strain>
    </source>
</reference>
<proteinExistence type="inferred from homology"/>
<accession>B8GMB9</accession>
<organism>
    <name type="scientific">Thioalkalivibrio sulfidiphilus (strain HL-EbGR7)</name>
    <dbReference type="NCBI Taxonomy" id="396588"/>
    <lineage>
        <taxon>Bacteria</taxon>
        <taxon>Pseudomonadati</taxon>
        <taxon>Pseudomonadota</taxon>
        <taxon>Gammaproteobacteria</taxon>
        <taxon>Chromatiales</taxon>
        <taxon>Ectothiorhodospiraceae</taxon>
        <taxon>Thioalkalivibrio</taxon>
    </lineage>
</organism>
<evidence type="ECO:0000255" key="1">
    <source>
        <dbReference type="HAMAP-Rule" id="MF_00478"/>
    </source>
</evidence>